<accession>A4QLV4</accession>
<sequence>MAKGKDVRVTIILECTSCVRNDIKKESSGISRYITQKNRHNTPSRLELRKFCPYCYKHTIHGEIKK</sequence>
<organism>
    <name type="scientific">Nasturtium officinale</name>
    <name type="common">Watercress</name>
    <name type="synonym">Rorippa nasturtium-aquaticum</name>
    <dbReference type="NCBI Taxonomy" id="65948"/>
    <lineage>
        <taxon>Eukaryota</taxon>
        <taxon>Viridiplantae</taxon>
        <taxon>Streptophyta</taxon>
        <taxon>Embryophyta</taxon>
        <taxon>Tracheophyta</taxon>
        <taxon>Spermatophyta</taxon>
        <taxon>Magnoliopsida</taxon>
        <taxon>eudicotyledons</taxon>
        <taxon>Gunneridae</taxon>
        <taxon>Pentapetalae</taxon>
        <taxon>rosids</taxon>
        <taxon>malvids</taxon>
        <taxon>Brassicales</taxon>
        <taxon>Brassicaceae</taxon>
        <taxon>Cardamineae</taxon>
        <taxon>Nasturtium</taxon>
    </lineage>
</organism>
<name>RK33_NASOF</name>
<proteinExistence type="inferred from homology"/>
<keyword id="KW-0150">Chloroplast</keyword>
<keyword id="KW-0934">Plastid</keyword>
<keyword id="KW-0687">Ribonucleoprotein</keyword>
<keyword id="KW-0689">Ribosomal protein</keyword>
<gene>
    <name evidence="1" type="primary">rpl33</name>
</gene>
<feature type="chain" id="PRO_0000356815" description="Large ribosomal subunit protein bL33c">
    <location>
        <begin position="1"/>
        <end position="66"/>
    </location>
</feature>
<comment type="subcellular location">
    <subcellularLocation>
        <location>Plastid</location>
        <location>Chloroplast</location>
    </subcellularLocation>
</comment>
<comment type="similarity">
    <text evidence="1">Belongs to the bacterial ribosomal protein bL33 family.</text>
</comment>
<evidence type="ECO:0000255" key="1">
    <source>
        <dbReference type="HAMAP-Rule" id="MF_00294"/>
    </source>
</evidence>
<evidence type="ECO:0000305" key="2"/>
<geneLocation type="chloroplast"/>
<dbReference type="EMBL" id="AP009376">
    <property type="protein sequence ID" value="BAF50659.1"/>
    <property type="molecule type" value="Genomic_DNA"/>
</dbReference>
<dbReference type="RefSeq" id="YP_001123835.1">
    <property type="nucleotide sequence ID" value="NC_009275.1"/>
</dbReference>
<dbReference type="GeneID" id="4962163"/>
<dbReference type="GO" id="GO:0009507">
    <property type="term" value="C:chloroplast"/>
    <property type="evidence" value="ECO:0007669"/>
    <property type="project" value="UniProtKB-SubCell"/>
</dbReference>
<dbReference type="GO" id="GO:1990904">
    <property type="term" value="C:ribonucleoprotein complex"/>
    <property type="evidence" value="ECO:0007669"/>
    <property type="project" value="UniProtKB-KW"/>
</dbReference>
<dbReference type="GO" id="GO:0005840">
    <property type="term" value="C:ribosome"/>
    <property type="evidence" value="ECO:0007669"/>
    <property type="project" value="UniProtKB-KW"/>
</dbReference>
<dbReference type="GO" id="GO:0003735">
    <property type="term" value="F:structural constituent of ribosome"/>
    <property type="evidence" value="ECO:0007669"/>
    <property type="project" value="InterPro"/>
</dbReference>
<dbReference type="GO" id="GO:0006412">
    <property type="term" value="P:translation"/>
    <property type="evidence" value="ECO:0007669"/>
    <property type="project" value="UniProtKB-UniRule"/>
</dbReference>
<dbReference type="FunFam" id="2.20.28.120:FF:000004">
    <property type="entry name" value="50S ribosomal protein L33, chloroplastic"/>
    <property type="match status" value="1"/>
</dbReference>
<dbReference type="Gene3D" id="2.20.28.120">
    <property type="entry name" value="Ribosomal protein L33"/>
    <property type="match status" value="1"/>
</dbReference>
<dbReference type="HAMAP" id="MF_00294">
    <property type="entry name" value="Ribosomal_bL33"/>
    <property type="match status" value="1"/>
</dbReference>
<dbReference type="InterPro" id="IPR001705">
    <property type="entry name" value="Ribosomal_bL33"/>
</dbReference>
<dbReference type="InterPro" id="IPR018264">
    <property type="entry name" value="Ribosomal_bL33_CS"/>
</dbReference>
<dbReference type="InterPro" id="IPR038584">
    <property type="entry name" value="Ribosomal_bL33_sf"/>
</dbReference>
<dbReference type="InterPro" id="IPR011332">
    <property type="entry name" value="Ribosomal_zn-bd"/>
</dbReference>
<dbReference type="NCBIfam" id="NF001764">
    <property type="entry name" value="PRK00504.1"/>
    <property type="match status" value="1"/>
</dbReference>
<dbReference type="NCBIfam" id="NF001860">
    <property type="entry name" value="PRK00595.1"/>
    <property type="match status" value="1"/>
</dbReference>
<dbReference type="NCBIfam" id="TIGR01023">
    <property type="entry name" value="rpmG_bact"/>
    <property type="match status" value="1"/>
</dbReference>
<dbReference type="PANTHER" id="PTHR43168">
    <property type="entry name" value="50S RIBOSOMAL PROTEIN L33, CHLOROPLASTIC"/>
    <property type="match status" value="1"/>
</dbReference>
<dbReference type="PANTHER" id="PTHR43168:SF2">
    <property type="entry name" value="LARGE RIBOSOMAL SUBUNIT PROTEIN BL33C"/>
    <property type="match status" value="1"/>
</dbReference>
<dbReference type="Pfam" id="PF00471">
    <property type="entry name" value="Ribosomal_L33"/>
    <property type="match status" value="1"/>
</dbReference>
<dbReference type="SUPFAM" id="SSF57829">
    <property type="entry name" value="Zn-binding ribosomal proteins"/>
    <property type="match status" value="1"/>
</dbReference>
<dbReference type="PROSITE" id="PS00582">
    <property type="entry name" value="RIBOSOMAL_L33"/>
    <property type="match status" value="1"/>
</dbReference>
<protein>
    <recommendedName>
        <fullName evidence="1">Large ribosomal subunit protein bL33c</fullName>
    </recommendedName>
    <alternativeName>
        <fullName evidence="2">50S ribosomal protein L33, chloroplastic</fullName>
    </alternativeName>
</protein>
<reference key="1">
    <citation type="submission" date="2007-03" db="EMBL/GenBank/DDBJ databases">
        <title>Sequencing analysis of Nasturtium officinale chloroplast DNA.</title>
        <authorList>
            <person name="Hosouchi T."/>
            <person name="Tsuruoka H."/>
            <person name="Kotani H."/>
        </authorList>
    </citation>
    <scope>NUCLEOTIDE SEQUENCE [LARGE SCALE GENOMIC DNA]</scope>
</reference>